<organism>
    <name type="scientific">Schizosaccharomyces pombe (strain 972 / ATCC 24843)</name>
    <name type="common">Fission yeast</name>
    <dbReference type="NCBI Taxonomy" id="284812"/>
    <lineage>
        <taxon>Eukaryota</taxon>
        <taxon>Fungi</taxon>
        <taxon>Dikarya</taxon>
        <taxon>Ascomycota</taxon>
        <taxon>Taphrinomycotina</taxon>
        <taxon>Schizosaccharomycetes</taxon>
        <taxon>Schizosaccharomycetales</taxon>
        <taxon>Schizosaccharomycetaceae</taxon>
        <taxon>Schizosaccharomyces</taxon>
    </lineage>
</organism>
<keyword id="KW-0963">Cytoplasm</keyword>
<keyword id="KW-0597">Phosphoprotein</keyword>
<keyword id="KW-1185">Reference proteome</keyword>
<proteinExistence type="evidence at protein level"/>
<reference key="1">
    <citation type="journal article" date="2002" name="Nature">
        <title>The genome sequence of Schizosaccharomyces pombe.</title>
        <authorList>
            <person name="Wood V."/>
            <person name="Gwilliam R."/>
            <person name="Rajandream M.A."/>
            <person name="Lyne M.H."/>
            <person name="Lyne R."/>
            <person name="Stewart A."/>
            <person name="Sgouros J.G."/>
            <person name="Peat N."/>
            <person name="Hayles J."/>
            <person name="Baker S.G."/>
            <person name="Basham D."/>
            <person name="Bowman S."/>
            <person name="Brooks K."/>
            <person name="Brown D."/>
            <person name="Brown S."/>
            <person name="Chillingworth T."/>
            <person name="Churcher C.M."/>
            <person name="Collins M."/>
            <person name="Connor R."/>
            <person name="Cronin A."/>
            <person name="Davis P."/>
            <person name="Feltwell T."/>
            <person name="Fraser A."/>
            <person name="Gentles S."/>
            <person name="Goble A."/>
            <person name="Hamlin N."/>
            <person name="Harris D.E."/>
            <person name="Hidalgo J."/>
            <person name="Hodgson G."/>
            <person name="Holroyd S."/>
            <person name="Hornsby T."/>
            <person name="Howarth S."/>
            <person name="Huckle E.J."/>
            <person name="Hunt S."/>
            <person name="Jagels K."/>
            <person name="James K.D."/>
            <person name="Jones L."/>
            <person name="Jones M."/>
            <person name="Leather S."/>
            <person name="McDonald S."/>
            <person name="McLean J."/>
            <person name="Mooney P."/>
            <person name="Moule S."/>
            <person name="Mungall K.L."/>
            <person name="Murphy L.D."/>
            <person name="Niblett D."/>
            <person name="Odell C."/>
            <person name="Oliver K."/>
            <person name="O'Neil S."/>
            <person name="Pearson D."/>
            <person name="Quail M.A."/>
            <person name="Rabbinowitsch E."/>
            <person name="Rutherford K.M."/>
            <person name="Rutter S."/>
            <person name="Saunders D."/>
            <person name="Seeger K."/>
            <person name="Sharp S."/>
            <person name="Skelton J."/>
            <person name="Simmonds M.N."/>
            <person name="Squares R."/>
            <person name="Squares S."/>
            <person name="Stevens K."/>
            <person name="Taylor K."/>
            <person name="Taylor R.G."/>
            <person name="Tivey A."/>
            <person name="Walsh S.V."/>
            <person name="Warren T."/>
            <person name="Whitehead S."/>
            <person name="Woodward J.R."/>
            <person name="Volckaert G."/>
            <person name="Aert R."/>
            <person name="Robben J."/>
            <person name="Grymonprez B."/>
            <person name="Weltjens I."/>
            <person name="Vanstreels E."/>
            <person name="Rieger M."/>
            <person name="Schaefer M."/>
            <person name="Mueller-Auer S."/>
            <person name="Gabel C."/>
            <person name="Fuchs M."/>
            <person name="Duesterhoeft A."/>
            <person name="Fritzc C."/>
            <person name="Holzer E."/>
            <person name="Moestl D."/>
            <person name="Hilbert H."/>
            <person name="Borzym K."/>
            <person name="Langer I."/>
            <person name="Beck A."/>
            <person name="Lehrach H."/>
            <person name="Reinhardt R."/>
            <person name="Pohl T.M."/>
            <person name="Eger P."/>
            <person name="Zimmermann W."/>
            <person name="Wedler H."/>
            <person name="Wambutt R."/>
            <person name="Purnelle B."/>
            <person name="Goffeau A."/>
            <person name="Cadieu E."/>
            <person name="Dreano S."/>
            <person name="Gloux S."/>
            <person name="Lelaure V."/>
            <person name="Mottier S."/>
            <person name="Galibert F."/>
            <person name="Aves S.J."/>
            <person name="Xiang Z."/>
            <person name="Hunt C."/>
            <person name="Moore K."/>
            <person name="Hurst S.M."/>
            <person name="Lucas M."/>
            <person name="Rochet M."/>
            <person name="Gaillardin C."/>
            <person name="Tallada V.A."/>
            <person name="Garzon A."/>
            <person name="Thode G."/>
            <person name="Daga R.R."/>
            <person name="Cruzado L."/>
            <person name="Jimenez J."/>
            <person name="Sanchez M."/>
            <person name="del Rey F."/>
            <person name="Benito J."/>
            <person name="Dominguez A."/>
            <person name="Revuelta J.L."/>
            <person name="Moreno S."/>
            <person name="Armstrong J."/>
            <person name="Forsburg S.L."/>
            <person name="Cerutti L."/>
            <person name="Lowe T."/>
            <person name="McCombie W.R."/>
            <person name="Paulsen I."/>
            <person name="Potashkin J."/>
            <person name="Shpakovski G.V."/>
            <person name="Ussery D."/>
            <person name="Barrell B.G."/>
            <person name="Nurse P."/>
        </authorList>
    </citation>
    <scope>NUCLEOTIDE SEQUENCE [LARGE SCALE GENOMIC DNA]</scope>
    <source>
        <strain>972 / ATCC 24843</strain>
    </source>
</reference>
<reference key="2">
    <citation type="journal article" date="2006" name="Nat. Biotechnol.">
        <title>ORFeome cloning and global analysis of protein localization in the fission yeast Schizosaccharomyces pombe.</title>
        <authorList>
            <person name="Matsuyama A."/>
            <person name="Arai R."/>
            <person name="Yashiroda Y."/>
            <person name="Shirai A."/>
            <person name="Kamata A."/>
            <person name="Sekido S."/>
            <person name="Kobayashi Y."/>
            <person name="Hashimoto A."/>
            <person name="Hamamoto M."/>
            <person name="Hiraoka Y."/>
            <person name="Horinouchi S."/>
            <person name="Yoshida M."/>
        </authorList>
    </citation>
    <scope>SUBCELLULAR LOCATION [LARGE SCALE ANALYSIS]</scope>
</reference>
<reference key="3">
    <citation type="journal article" date="2008" name="J. Proteome Res.">
        <title>Phosphoproteome analysis of fission yeast.</title>
        <authorList>
            <person name="Wilson-Grady J.T."/>
            <person name="Villen J."/>
            <person name="Gygi S.P."/>
        </authorList>
    </citation>
    <scope>PHOSPHORYLATION [LARGE SCALE ANALYSIS] AT SER-653</scope>
    <scope>IDENTIFICATION BY MASS SPECTROMETRY</scope>
</reference>
<evidence type="ECO:0000250" key="1"/>
<evidence type="ECO:0000256" key="2">
    <source>
        <dbReference type="SAM" id="MobiDB-lite"/>
    </source>
</evidence>
<evidence type="ECO:0000269" key="3">
    <source>
    </source>
</evidence>
<evidence type="ECO:0000269" key="4">
    <source>
    </source>
</evidence>
<evidence type="ECO:0000305" key="5"/>
<feature type="chain" id="PRO_0000303890" description="Putative arrestin-related trafficking adapter C2D10.04">
    <location>
        <begin position="1"/>
        <end position="658"/>
    </location>
</feature>
<feature type="region of interest" description="Disordered" evidence="2">
    <location>
        <begin position="21"/>
        <end position="107"/>
    </location>
</feature>
<feature type="region of interest" description="Disordered" evidence="2">
    <location>
        <begin position="638"/>
        <end position="658"/>
    </location>
</feature>
<feature type="compositionally biased region" description="Low complexity" evidence="2">
    <location>
        <begin position="39"/>
        <end position="81"/>
    </location>
</feature>
<feature type="compositionally biased region" description="Polar residues" evidence="2">
    <location>
        <begin position="96"/>
        <end position="107"/>
    </location>
</feature>
<feature type="modified residue" description="Phosphoserine" evidence="4">
    <location>
        <position position="653"/>
    </location>
</feature>
<sequence>MRGELNIPALSRFGKSISASLHHQNGSSRDDNDSNPYENRSSNSGLNRRNSVFGLPSSGLSSRLSKPSLSSINNSNNSSSNTGGNVLPNPALTPVRNMSNKPPLTWSPSSANLFGTSKVTSIIGNNVSDVVPPVIKKALASSHGGGMSLSIVLLEPVLYLAGFDLNECQIENPALLRGALVLRVAKPANIRGISLSFTGRSRTEWPEGIPVKGHDTYEDKVIISHNWKFYEPTMKDADAPQHGADVARLVGEQLPLPSSAAASLRGYSVFAPGEYTYNFDLAIPNCFPESVEAKMGWVRYFLEATVERFGTFKSNLNGRTPVQLVRTPSPASLSSSELINISRDWDERLHYELQVSGKSFRLGEVVPITFRFLLLDKVRLYKLSISVVESSEYWCRSRKFHRVDPKRRVLLAERSAKHQNTDNLFETPDEGDGLSSAVFNFNVALPTCLVKERDRLTFDTTYKYIKVRHRLKALLVLSIENTENPEKRKYFEINIETPVRILSCRCVKDSTLLPPYESSSQGDNQVLLPCPCRLATTHVEPTEVTAFTTQSVLASSAPSAGRPAAAQISRPAQLFRIPSTNPPPFDGDVCPPACNTPPPNYDELFDVLSSISIQDCETDRANDDTILNNRVRRSGTIREEAPHRSLSRTVSRSFEIPR</sequence>
<protein>
    <recommendedName>
        <fullName>Putative arrestin-related trafficking adapter C2D10.04</fullName>
    </recommendedName>
</protein>
<gene>
    <name type="ORF">SPBC2D10.04</name>
</gene>
<dbReference type="EMBL" id="CU329671">
    <property type="protein sequence ID" value="CAA21162.1"/>
    <property type="molecule type" value="Genomic_DNA"/>
</dbReference>
<dbReference type="PIR" id="T40107">
    <property type="entry name" value="T40107"/>
</dbReference>
<dbReference type="BioGRID" id="276938">
    <property type="interactions" value="21"/>
</dbReference>
<dbReference type="FunCoup" id="O74798">
    <property type="interactions" value="418"/>
</dbReference>
<dbReference type="STRING" id="284812.O74798"/>
<dbReference type="iPTMnet" id="O74798"/>
<dbReference type="PaxDb" id="4896-SPBC2D10.04.1"/>
<dbReference type="EnsemblFungi" id="SPBC2D10.04.1">
    <property type="protein sequence ID" value="SPBC2D10.04.1:pep"/>
    <property type="gene ID" value="SPBC2D10.04"/>
</dbReference>
<dbReference type="KEGG" id="spo:2540410"/>
<dbReference type="PomBase" id="SPBC2D10.04"/>
<dbReference type="VEuPathDB" id="FungiDB:SPBC2D10.04"/>
<dbReference type="eggNOG" id="KOG3780">
    <property type="taxonomic scope" value="Eukaryota"/>
</dbReference>
<dbReference type="HOGENOM" id="CLU_008578_2_1_1"/>
<dbReference type="InParanoid" id="O74798"/>
<dbReference type="OMA" id="FHILSCK"/>
<dbReference type="PhylomeDB" id="O74798"/>
<dbReference type="Reactome" id="R-SPO-844456">
    <property type="pathway name" value="The NLRP3 inflammasome"/>
</dbReference>
<dbReference type="PRO" id="PR:O74798"/>
<dbReference type="Proteomes" id="UP000002485">
    <property type="component" value="Chromosome II"/>
</dbReference>
<dbReference type="GO" id="GO:0032153">
    <property type="term" value="C:cell division site"/>
    <property type="evidence" value="ECO:0007005"/>
    <property type="project" value="PomBase"/>
</dbReference>
<dbReference type="GO" id="GO:0051286">
    <property type="term" value="C:cell tip"/>
    <property type="evidence" value="ECO:0007005"/>
    <property type="project" value="PomBase"/>
</dbReference>
<dbReference type="GO" id="GO:0005737">
    <property type="term" value="C:cytoplasm"/>
    <property type="evidence" value="ECO:0007005"/>
    <property type="project" value="PomBase"/>
</dbReference>
<dbReference type="GO" id="GO:0005829">
    <property type="term" value="C:cytosol"/>
    <property type="evidence" value="ECO:0007005"/>
    <property type="project" value="PomBase"/>
</dbReference>
<dbReference type="GO" id="GO:0005509">
    <property type="term" value="F:calcium ion binding"/>
    <property type="evidence" value="ECO:0000255"/>
    <property type="project" value="PomBase"/>
</dbReference>
<dbReference type="GO" id="GO:0030674">
    <property type="term" value="F:protein-macromolecule adaptor activity"/>
    <property type="evidence" value="ECO:0000318"/>
    <property type="project" value="GO_Central"/>
</dbReference>
<dbReference type="GO" id="GO:0031625">
    <property type="term" value="F:ubiquitin protein ligase binding"/>
    <property type="evidence" value="ECO:0000318"/>
    <property type="project" value="GO_Central"/>
</dbReference>
<dbReference type="GO" id="GO:0072583">
    <property type="term" value="P:clathrin-dependent endocytosis"/>
    <property type="evidence" value="ECO:0000266"/>
    <property type="project" value="PomBase"/>
</dbReference>
<dbReference type="GO" id="GO:0070086">
    <property type="term" value="P:ubiquitin-dependent endocytosis"/>
    <property type="evidence" value="ECO:0000318"/>
    <property type="project" value="GO_Central"/>
</dbReference>
<dbReference type="FunFam" id="2.60.40.640:FF:000086">
    <property type="entry name" value="Putative arrestin-related trafficking adapter SPBC839.02"/>
    <property type="match status" value="1"/>
</dbReference>
<dbReference type="Gene3D" id="2.60.40.640">
    <property type="match status" value="1"/>
</dbReference>
<dbReference type="InterPro" id="IPR014752">
    <property type="entry name" value="Arrestin-like_C"/>
</dbReference>
<dbReference type="InterPro" id="IPR011021">
    <property type="entry name" value="Arrestin-like_N"/>
</dbReference>
<dbReference type="InterPro" id="IPR011022">
    <property type="entry name" value="Arrestin_C-like"/>
</dbReference>
<dbReference type="InterPro" id="IPR050357">
    <property type="entry name" value="Arrestin_domain-protein"/>
</dbReference>
<dbReference type="InterPro" id="IPR014756">
    <property type="entry name" value="Ig_E-set"/>
</dbReference>
<dbReference type="PANTHER" id="PTHR11188">
    <property type="entry name" value="ARRESTIN DOMAIN CONTAINING PROTEIN"/>
    <property type="match status" value="1"/>
</dbReference>
<dbReference type="PANTHER" id="PTHR11188:SF177">
    <property type="entry name" value="ARRESTIN-RELATED TRAFFICKING ADAPTER C2D10.04-RELATED"/>
    <property type="match status" value="1"/>
</dbReference>
<dbReference type="Pfam" id="PF02752">
    <property type="entry name" value="Arrestin_C"/>
    <property type="match status" value="1"/>
</dbReference>
<dbReference type="Pfam" id="PF00339">
    <property type="entry name" value="Arrestin_N"/>
    <property type="match status" value="1"/>
</dbReference>
<dbReference type="SMART" id="SM01017">
    <property type="entry name" value="Arrestin_C"/>
    <property type="match status" value="1"/>
</dbReference>
<dbReference type="SUPFAM" id="SSF81296">
    <property type="entry name" value="E set domains"/>
    <property type="match status" value="1"/>
</dbReference>
<comment type="function">
    <text evidence="1">May regulate endocytosis in response to extracellular stimuli.</text>
</comment>
<comment type="subcellular location">
    <subcellularLocation>
        <location evidence="3">Cytoplasm</location>
    </subcellularLocation>
    <text>Localizes at the cell tip and barrier septum.</text>
</comment>
<comment type="similarity">
    <text evidence="5">Belongs to the ALY1 family.</text>
</comment>
<accession>O74798</accession>
<name>ALY2_SCHPO</name>